<dbReference type="EMBL" id="U20529">
    <property type="protein sequence ID" value="AAA62169.1"/>
    <property type="molecule type" value="Genomic_DNA"/>
</dbReference>
<dbReference type="SMR" id="P46190"/>
<dbReference type="GO" id="GO:0022627">
    <property type="term" value="C:cytosolic small ribosomal subunit"/>
    <property type="evidence" value="ECO:0007669"/>
    <property type="project" value="TreeGrafter"/>
</dbReference>
<dbReference type="GO" id="GO:0019843">
    <property type="term" value="F:rRNA binding"/>
    <property type="evidence" value="ECO:0007669"/>
    <property type="project" value="UniProtKB-KW"/>
</dbReference>
<dbReference type="GO" id="GO:0003735">
    <property type="term" value="F:structural constituent of ribosome"/>
    <property type="evidence" value="ECO:0007669"/>
    <property type="project" value="InterPro"/>
</dbReference>
<dbReference type="GO" id="GO:0006412">
    <property type="term" value="P:translation"/>
    <property type="evidence" value="ECO:0007669"/>
    <property type="project" value="InterPro"/>
</dbReference>
<dbReference type="CDD" id="cd00353">
    <property type="entry name" value="Ribosomal_S15p_S13e"/>
    <property type="match status" value="1"/>
</dbReference>
<dbReference type="Gene3D" id="6.10.250.3130">
    <property type="match status" value="1"/>
</dbReference>
<dbReference type="Gene3D" id="1.10.287.10">
    <property type="entry name" value="S15/NS1, RNA-binding"/>
    <property type="match status" value="1"/>
</dbReference>
<dbReference type="HAMAP" id="MF_01343_B">
    <property type="entry name" value="Ribosomal_uS15_B"/>
    <property type="match status" value="1"/>
</dbReference>
<dbReference type="InterPro" id="IPR000589">
    <property type="entry name" value="Ribosomal_uS15"/>
</dbReference>
<dbReference type="InterPro" id="IPR005290">
    <property type="entry name" value="Ribosomal_uS15_bac-type"/>
</dbReference>
<dbReference type="InterPro" id="IPR009068">
    <property type="entry name" value="uS15_NS1_RNA-bd_sf"/>
</dbReference>
<dbReference type="NCBIfam" id="TIGR00952">
    <property type="entry name" value="S15_bact"/>
    <property type="match status" value="1"/>
</dbReference>
<dbReference type="PANTHER" id="PTHR23321">
    <property type="entry name" value="RIBOSOMAL PROTEIN S15, BACTERIAL AND ORGANELLAR"/>
    <property type="match status" value="1"/>
</dbReference>
<dbReference type="PANTHER" id="PTHR23321:SF26">
    <property type="entry name" value="SMALL RIBOSOMAL SUBUNIT PROTEIN US15M"/>
    <property type="match status" value="1"/>
</dbReference>
<dbReference type="Pfam" id="PF00312">
    <property type="entry name" value="Ribosomal_S15"/>
    <property type="match status" value="1"/>
</dbReference>
<dbReference type="SMART" id="SM01387">
    <property type="entry name" value="Ribosomal_S15"/>
    <property type="match status" value="1"/>
</dbReference>
<dbReference type="SUPFAM" id="SSF47060">
    <property type="entry name" value="S15/NS1 RNA-binding domain"/>
    <property type="match status" value="1"/>
</dbReference>
<dbReference type="PROSITE" id="PS00362">
    <property type="entry name" value="RIBOSOMAL_S15"/>
    <property type="match status" value="1"/>
</dbReference>
<name>RS15_MESHY</name>
<accession>P46190</accession>
<organism>
    <name type="scientific">Mesomycoplasma hyorhinis</name>
    <name type="common">Mycoplasma hyorhinis</name>
    <dbReference type="NCBI Taxonomy" id="2100"/>
    <lineage>
        <taxon>Bacteria</taxon>
        <taxon>Bacillati</taxon>
        <taxon>Mycoplasmatota</taxon>
        <taxon>Mycoplasmoidales</taxon>
        <taxon>Metamycoplasmataceae</taxon>
        <taxon>Mesomycoplasma</taxon>
    </lineage>
</organism>
<sequence length="81" mass="9409">MISKEKKLELVLKFGGSQKNTGDTRVQIAILTEDIESLKKHFAVNKKDKHSMRGFIAKVNQRKRLLAYLKEKDFNAYKQTI</sequence>
<evidence type="ECO:0000255" key="1">
    <source>
        <dbReference type="HAMAP-Rule" id="MF_01343"/>
    </source>
</evidence>
<evidence type="ECO:0000305" key="2"/>
<comment type="function">
    <text evidence="1">One of the primary rRNA binding proteins, it binds directly to 16S rRNA where it helps nucleate assembly of the platform of the 30S subunit by binding and bridging several RNA helices of the 16S rRNA.</text>
</comment>
<comment type="function">
    <text evidence="1">Forms an intersubunit bridge (bridge B4) with the 23S rRNA of the 50S subunit in the ribosome.</text>
</comment>
<comment type="subunit">
    <text evidence="1">Part of the 30S ribosomal subunit. Forms a bridge to the 50S subunit in the 70S ribosome, contacting the 23S rRNA.</text>
</comment>
<comment type="similarity">
    <text evidence="1">Belongs to the universal ribosomal protein uS15 family.</text>
</comment>
<feature type="chain" id="PRO_0000115480" description="Small ribosomal subunit protein uS15">
    <location>
        <begin position="1"/>
        <end position="81" status="greater than"/>
    </location>
</feature>
<feature type="non-terminal residue">
    <location>
        <position position="81"/>
    </location>
</feature>
<reference key="1">
    <citation type="submission" date="1995-01" db="EMBL/GenBank/DDBJ databases">
        <authorList>
            <person name="Xiang H."/>
            <person name="McIntosh M.A."/>
        </authorList>
    </citation>
    <scope>NUCLEOTIDE SEQUENCE [GENOMIC DNA]</scope>
    <source>
        <strain>GDL-1</strain>
    </source>
</reference>
<keyword id="KW-0687">Ribonucleoprotein</keyword>
<keyword id="KW-0689">Ribosomal protein</keyword>
<keyword id="KW-0694">RNA-binding</keyword>
<keyword id="KW-0699">rRNA-binding</keyword>
<protein>
    <recommendedName>
        <fullName evidence="1">Small ribosomal subunit protein uS15</fullName>
    </recommendedName>
    <alternativeName>
        <fullName evidence="2">30S ribosomal protein S15</fullName>
    </alternativeName>
</protein>
<gene>
    <name evidence="1" type="primary">rpsO</name>
</gene>
<proteinExistence type="inferred from homology"/>